<accession>A3MZ40</accession>
<protein>
    <recommendedName>
        <fullName evidence="1">Na(+)/H(+) antiporter NhaB</fullName>
    </recommendedName>
    <alternativeName>
        <fullName evidence="1">Sodium/proton antiporter NhaB</fullName>
    </alternativeName>
</protein>
<feature type="chain" id="PRO_0000333080" description="Na(+)/H(+) antiporter NhaB">
    <location>
        <begin position="1"/>
        <end position="513"/>
    </location>
</feature>
<feature type="transmembrane region" description="Helical" evidence="1">
    <location>
        <begin position="21"/>
        <end position="41"/>
    </location>
</feature>
<feature type="transmembrane region" description="Helical" evidence="1">
    <location>
        <begin position="88"/>
        <end position="108"/>
    </location>
</feature>
<feature type="transmembrane region" description="Helical" evidence="1">
    <location>
        <begin position="119"/>
        <end position="139"/>
    </location>
</feature>
<feature type="transmembrane region" description="Helical" evidence="1">
    <location>
        <begin position="243"/>
        <end position="263"/>
    </location>
</feature>
<feature type="transmembrane region" description="Helical" evidence="1">
    <location>
        <begin position="299"/>
        <end position="318"/>
    </location>
</feature>
<feature type="transmembrane region" description="Helical" evidence="1">
    <location>
        <begin position="322"/>
        <end position="344"/>
    </location>
</feature>
<feature type="transmembrane region" description="Helical" evidence="1">
    <location>
        <begin position="350"/>
        <end position="370"/>
    </location>
</feature>
<feature type="transmembrane region" description="Helical" evidence="1">
    <location>
        <begin position="389"/>
        <end position="409"/>
    </location>
</feature>
<feature type="transmembrane region" description="Helical" evidence="1">
    <location>
        <begin position="477"/>
        <end position="497"/>
    </location>
</feature>
<gene>
    <name evidence="1" type="primary">nhaB</name>
    <name type="ordered locus">APL_0322</name>
</gene>
<organism>
    <name type="scientific">Actinobacillus pleuropneumoniae serotype 5b (strain L20)</name>
    <dbReference type="NCBI Taxonomy" id="416269"/>
    <lineage>
        <taxon>Bacteria</taxon>
        <taxon>Pseudomonadati</taxon>
        <taxon>Pseudomonadota</taxon>
        <taxon>Gammaproteobacteria</taxon>
        <taxon>Pasteurellales</taxon>
        <taxon>Pasteurellaceae</taxon>
        <taxon>Actinobacillus</taxon>
    </lineage>
</organism>
<keyword id="KW-0050">Antiport</keyword>
<keyword id="KW-0997">Cell inner membrane</keyword>
<keyword id="KW-1003">Cell membrane</keyword>
<keyword id="KW-0406">Ion transport</keyword>
<keyword id="KW-0472">Membrane</keyword>
<keyword id="KW-1185">Reference proteome</keyword>
<keyword id="KW-0915">Sodium</keyword>
<keyword id="KW-0739">Sodium transport</keyword>
<keyword id="KW-0812">Transmembrane</keyword>
<keyword id="KW-1133">Transmembrane helix</keyword>
<keyword id="KW-0813">Transport</keyword>
<name>NHAB_ACTP2</name>
<sequence>MDSSNAIFKSFLGKAPEWYKICIIAFLVINPLIYFFISPFVAGWALVAEFIFTLSMALKCYPLQPGGLLAIEAVFIGMTSAHHVKEEIMANFEVILLLMFMVAGIYFMKQLLLYVFTKLLIVIHSKKILSLAFCLSATFLSAFLDALTVIAVIISVGTGFYGVYHKVASGNSFEDSTDISNDEKIITNKEILEQFRAFLRSPLMHAAVGSALGGVMTMVGEPQNLIIAGQAEWGFVEFLLRVLPVSLPVLICGVITCLLLEHFKIFGYGARLPRRVWGVLARYNLLKEQRMTQQDRVKMGIQALAGIWLVVGLALHLADVGIIGLTIIIICTAFCGITDEHAIGRSFQEPMPFTALIVVFFTVVAVIVDLKLFEPIISYVLSADPHSQLALFYVFNGLLSMISDNVFVGTVYINEAKTALESAIISREQFDLIAVAINTGTNLPSVATPNGQAAFLFLLTSPFAPLIRLSYGKMLYMALPYTIVLSIIGFLSLEFLLPPLTELMSNWGWIITR</sequence>
<reference key="1">
    <citation type="journal article" date="2008" name="J. Bacteriol.">
        <title>The complete genome sequence of Actinobacillus pleuropneumoniae L20 (serotype 5b).</title>
        <authorList>
            <person name="Foote S.J."/>
            <person name="Bosse J.T."/>
            <person name="Bouevitch A.B."/>
            <person name="Langford P.R."/>
            <person name="Young N.M."/>
            <person name="Nash J.H.E."/>
        </authorList>
    </citation>
    <scope>NUCLEOTIDE SEQUENCE [LARGE SCALE GENOMIC DNA]</scope>
    <source>
        <strain>L20</strain>
    </source>
</reference>
<evidence type="ECO:0000255" key="1">
    <source>
        <dbReference type="HAMAP-Rule" id="MF_01599"/>
    </source>
</evidence>
<dbReference type="EMBL" id="CP000569">
    <property type="protein sequence ID" value="ABN73426.1"/>
    <property type="molecule type" value="Genomic_DNA"/>
</dbReference>
<dbReference type="RefSeq" id="WP_011848354.1">
    <property type="nucleotide sequence ID" value="NC_009053.1"/>
</dbReference>
<dbReference type="SMR" id="A3MZ40"/>
<dbReference type="STRING" id="416269.APL_0322"/>
<dbReference type="EnsemblBacteria" id="ABN73426">
    <property type="protein sequence ID" value="ABN73426"/>
    <property type="gene ID" value="APL_0322"/>
</dbReference>
<dbReference type="KEGG" id="apl:APL_0322"/>
<dbReference type="PATRIC" id="fig|416269.6.peg.330"/>
<dbReference type="eggNOG" id="COG3067">
    <property type="taxonomic scope" value="Bacteria"/>
</dbReference>
<dbReference type="HOGENOM" id="CLU_041110_0_0_6"/>
<dbReference type="Proteomes" id="UP000001432">
    <property type="component" value="Chromosome"/>
</dbReference>
<dbReference type="GO" id="GO:0005886">
    <property type="term" value="C:plasma membrane"/>
    <property type="evidence" value="ECO:0007669"/>
    <property type="project" value="UniProtKB-SubCell"/>
</dbReference>
<dbReference type="GO" id="GO:0015385">
    <property type="term" value="F:sodium:proton antiporter activity"/>
    <property type="evidence" value="ECO:0007669"/>
    <property type="project" value="InterPro"/>
</dbReference>
<dbReference type="HAMAP" id="MF_01599">
    <property type="entry name" value="NhaB"/>
    <property type="match status" value="1"/>
</dbReference>
<dbReference type="InterPro" id="IPR004671">
    <property type="entry name" value="Na+/H+_antiporter_NhaB"/>
</dbReference>
<dbReference type="NCBIfam" id="TIGR00774">
    <property type="entry name" value="NhaB"/>
    <property type="match status" value="1"/>
</dbReference>
<dbReference type="NCBIfam" id="NF007093">
    <property type="entry name" value="PRK09547.1"/>
    <property type="match status" value="1"/>
</dbReference>
<dbReference type="PANTHER" id="PTHR43302:SF1">
    <property type="entry name" value="NA(+)_H(+) ANTIPORTER NHAB"/>
    <property type="match status" value="1"/>
</dbReference>
<dbReference type="PANTHER" id="PTHR43302">
    <property type="entry name" value="TRANSPORTER ARSB-RELATED"/>
    <property type="match status" value="1"/>
</dbReference>
<dbReference type="Pfam" id="PF06450">
    <property type="entry name" value="NhaB"/>
    <property type="match status" value="1"/>
</dbReference>
<comment type="function">
    <text evidence="1">Na(+)/H(+) antiporter that extrudes sodium in exchange for external protons.</text>
</comment>
<comment type="catalytic activity">
    <reaction evidence="1">
        <text>2 Na(+)(in) + 3 H(+)(out) = 2 Na(+)(out) + 3 H(+)(in)</text>
        <dbReference type="Rhea" id="RHEA:29247"/>
        <dbReference type="ChEBI" id="CHEBI:15378"/>
        <dbReference type="ChEBI" id="CHEBI:29101"/>
    </reaction>
    <physiologicalReaction direction="left-to-right" evidence="1">
        <dbReference type="Rhea" id="RHEA:29248"/>
    </physiologicalReaction>
</comment>
<comment type="subcellular location">
    <subcellularLocation>
        <location evidence="1">Cell inner membrane</location>
        <topology evidence="1">Multi-pass membrane protein</topology>
    </subcellularLocation>
</comment>
<comment type="similarity">
    <text evidence="1">Belongs to the NhaB Na(+)/H(+) (TC 2.A.34) antiporter family.</text>
</comment>
<proteinExistence type="inferred from homology"/>